<dbReference type="EMBL" id="AK002320">
    <property type="protein sequence ID" value="BAB22011.1"/>
    <property type="molecule type" value="mRNA"/>
</dbReference>
<dbReference type="EMBL" id="AK003831">
    <property type="protein sequence ID" value="BAB23025.1"/>
    <property type="molecule type" value="mRNA"/>
</dbReference>
<dbReference type="EMBL" id="AC154603">
    <property type="status" value="NOT_ANNOTATED_CDS"/>
    <property type="molecule type" value="Genomic_DNA"/>
</dbReference>
<dbReference type="EMBL" id="AL627302">
    <property type="status" value="NOT_ANNOTATED_CDS"/>
    <property type="molecule type" value="Genomic_DNA"/>
</dbReference>
<dbReference type="EMBL" id="CT009733">
    <property type="status" value="NOT_ANNOTATED_CDS"/>
    <property type="molecule type" value="Genomic_DNA"/>
</dbReference>
<dbReference type="EMBL" id="CH466637">
    <property type="protein sequence ID" value="EDL29756.1"/>
    <property type="molecule type" value="Genomic_DNA"/>
</dbReference>
<dbReference type="EMBL" id="BC107209">
    <property type="protein sequence ID" value="AAI07210.1"/>
    <property type="molecule type" value="mRNA"/>
</dbReference>
<dbReference type="EMBL" id="BC016557">
    <property type="protein sequence ID" value="AAH16557.1"/>
    <property type="molecule type" value="mRNA"/>
</dbReference>
<dbReference type="CCDS" id="CCDS53136.1">
    <molecule id="Q9DCZ4-1"/>
</dbReference>
<dbReference type="CCDS" id="CCDS57769.1">
    <molecule id="Q9DCZ4-3"/>
</dbReference>
<dbReference type="CCDS" id="CCDS57770.1">
    <molecule id="Q9DCZ4-2"/>
</dbReference>
<dbReference type="RefSeq" id="NP_001186266.1">
    <molecule id="Q9DCZ4-3"/>
    <property type="nucleotide sequence ID" value="NM_001199337.1"/>
</dbReference>
<dbReference type="RefSeq" id="NP_001186267.1">
    <molecule id="Q9DCZ4-2"/>
    <property type="nucleotide sequence ID" value="NM_001199338.1"/>
</dbReference>
<dbReference type="RefSeq" id="NP_001186268.1">
    <molecule id="Q9DCZ4-2"/>
    <property type="nucleotide sequence ID" value="NM_001199339.1"/>
</dbReference>
<dbReference type="RefSeq" id="NP_080949.2">
    <molecule id="Q9DCZ4-1"/>
    <property type="nucleotide sequence ID" value="NM_026673.4"/>
</dbReference>
<dbReference type="BioGRID" id="212802">
    <property type="interactions" value="31"/>
</dbReference>
<dbReference type="FunCoup" id="Q9DCZ4">
    <property type="interactions" value="938"/>
</dbReference>
<dbReference type="IntAct" id="Q9DCZ4">
    <property type="interactions" value="2"/>
</dbReference>
<dbReference type="MINT" id="Q9DCZ4"/>
<dbReference type="STRING" id="10090.ENSMUSP00000109530"/>
<dbReference type="GlyCosmos" id="Q9DCZ4">
    <property type="glycosylation" value="1 site, No reported glycans"/>
</dbReference>
<dbReference type="GlyGen" id="Q9DCZ4">
    <property type="glycosylation" value="2 sites, 1 O-linked glycan (1 site)"/>
</dbReference>
<dbReference type="iPTMnet" id="Q9DCZ4"/>
<dbReference type="PhosphoSitePlus" id="Q9DCZ4"/>
<dbReference type="SwissPalm" id="Q9DCZ4"/>
<dbReference type="CPTAC" id="non-CPTAC-3478"/>
<dbReference type="jPOST" id="Q9DCZ4"/>
<dbReference type="PaxDb" id="10090-ENSMUSP00000109531"/>
<dbReference type="ProteomicsDB" id="295903">
    <molecule id="Q9DCZ4-1"/>
</dbReference>
<dbReference type="ProteomicsDB" id="295904">
    <molecule id="Q9DCZ4-2"/>
</dbReference>
<dbReference type="ProteomicsDB" id="295905">
    <molecule id="Q9DCZ4-3"/>
</dbReference>
<dbReference type="Pumba" id="Q9DCZ4"/>
<dbReference type="Antibodypedia" id="564">
    <property type="antibodies" value="176 antibodies from 27 providers"/>
</dbReference>
<dbReference type="Ensembl" id="ENSMUST00000113895.2">
    <molecule id="Q9DCZ4-2"/>
    <property type="protein sequence ID" value="ENSMUSP00000109528.2"/>
    <property type="gene ID" value="ENSMUSG00000079508.9"/>
</dbReference>
<dbReference type="Ensembl" id="ENSMUST00000113896.8">
    <molecule id="Q9DCZ4-2"/>
    <property type="protein sequence ID" value="ENSMUSP00000109529.2"/>
    <property type="gene ID" value="ENSMUSG00000079508.9"/>
</dbReference>
<dbReference type="Ensembl" id="ENSMUST00000113897.9">
    <molecule id="Q9DCZ4-3"/>
    <property type="protein sequence ID" value="ENSMUSP00000109530.3"/>
    <property type="gene ID" value="ENSMUSG00000079508.9"/>
</dbReference>
<dbReference type="Ensembl" id="ENSMUST00000113898.8">
    <molecule id="Q9DCZ4-1"/>
    <property type="protein sequence ID" value="ENSMUSP00000109531.2"/>
    <property type="gene ID" value="ENSMUSG00000079508.9"/>
</dbReference>
<dbReference type="GeneID" id="68316"/>
<dbReference type="KEGG" id="mmu:68316"/>
<dbReference type="UCSC" id="uc009ttl.2">
    <molecule id="Q9DCZ4-1"/>
    <property type="organism name" value="mouse"/>
</dbReference>
<dbReference type="UCSC" id="uc012hmd.1">
    <property type="organism name" value="mouse"/>
</dbReference>
<dbReference type="AGR" id="MGI:1915566"/>
<dbReference type="CTD" id="79135"/>
<dbReference type="MGI" id="MGI:1915566">
    <property type="gene designation" value="Apoo"/>
</dbReference>
<dbReference type="VEuPathDB" id="HostDB:ENSMUSG00000079508"/>
<dbReference type="eggNOG" id="KOG4798">
    <property type="taxonomic scope" value="Eukaryota"/>
</dbReference>
<dbReference type="GeneTree" id="ENSGT00530000063666"/>
<dbReference type="InParanoid" id="Q9DCZ4"/>
<dbReference type="OMA" id="KVYASQK"/>
<dbReference type="OrthoDB" id="9421762at2759"/>
<dbReference type="PhylomeDB" id="Q9DCZ4"/>
<dbReference type="TreeFam" id="TF315313"/>
<dbReference type="BioGRID-ORCS" id="68316">
    <property type="hits" value="1 hit in 74 CRISPR screens"/>
</dbReference>
<dbReference type="CD-CODE" id="CE726F99">
    <property type="entry name" value="Postsynaptic density"/>
</dbReference>
<dbReference type="ChiTaRS" id="Apoo">
    <property type="organism name" value="mouse"/>
</dbReference>
<dbReference type="PRO" id="PR:Q9DCZ4"/>
<dbReference type="Proteomes" id="UP000000589">
    <property type="component" value="Chromosome X"/>
</dbReference>
<dbReference type="RNAct" id="Q9DCZ4">
    <property type="molecule type" value="protein"/>
</dbReference>
<dbReference type="Bgee" id="ENSMUSG00000079508">
    <property type="expression patterns" value="Expressed in quadriceps femoris and 67 other cell types or tissues"/>
</dbReference>
<dbReference type="GO" id="GO:0005829">
    <property type="term" value="C:cytosol"/>
    <property type="evidence" value="ECO:0007669"/>
    <property type="project" value="Ensembl"/>
</dbReference>
<dbReference type="GO" id="GO:0005789">
    <property type="term" value="C:endoplasmic reticulum membrane"/>
    <property type="evidence" value="ECO:0000250"/>
    <property type="project" value="UniProtKB"/>
</dbReference>
<dbReference type="GO" id="GO:0005576">
    <property type="term" value="C:extracellular region"/>
    <property type="evidence" value="ECO:0000250"/>
    <property type="project" value="UniProtKB"/>
</dbReference>
<dbReference type="GO" id="GO:0000139">
    <property type="term" value="C:Golgi membrane"/>
    <property type="evidence" value="ECO:0000250"/>
    <property type="project" value="UniProtKB"/>
</dbReference>
<dbReference type="GO" id="GO:0061617">
    <property type="term" value="C:MICOS complex"/>
    <property type="evidence" value="ECO:0000250"/>
    <property type="project" value="UniProtKB"/>
</dbReference>
<dbReference type="GO" id="GO:0005743">
    <property type="term" value="C:mitochondrial inner membrane"/>
    <property type="evidence" value="ECO:0000250"/>
    <property type="project" value="UniProtKB"/>
</dbReference>
<dbReference type="GO" id="GO:0005739">
    <property type="term" value="C:mitochondrion"/>
    <property type="evidence" value="ECO:0000314"/>
    <property type="project" value="MGI"/>
</dbReference>
<dbReference type="GO" id="GO:0042407">
    <property type="term" value="P:cristae formation"/>
    <property type="evidence" value="ECO:0000250"/>
    <property type="project" value="UniProtKB"/>
</dbReference>
<dbReference type="InterPro" id="IPR019166">
    <property type="entry name" value="MIC26/MIC27"/>
</dbReference>
<dbReference type="InterPro" id="IPR033182">
    <property type="entry name" value="MIC26/MIC27_animal"/>
</dbReference>
<dbReference type="PANTHER" id="PTHR14564">
    <property type="entry name" value="MICOS COMPLEX SUBUNIT MIC26 / MIC27 FAMILY MEMBER"/>
    <property type="match status" value="1"/>
</dbReference>
<dbReference type="Pfam" id="PF09769">
    <property type="entry name" value="ApoO"/>
    <property type="match status" value="1"/>
</dbReference>
<feature type="signal peptide" evidence="2">
    <location>
        <begin position="1"/>
        <end position="23"/>
    </location>
</feature>
<feature type="chain" id="PRO_0000254647" description="MICOS complex subunit Mic26">
    <location>
        <begin position="24"/>
        <end position="198"/>
    </location>
</feature>
<feature type="transmembrane region" description="Helical" evidence="2">
    <location>
        <begin position="108"/>
        <end position="128"/>
    </location>
</feature>
<feature type="glycosylation site" description="N-linked (GlcNAc...) asparagine" evidence="2">
    <location>
        <position position="63"/>
    </location>
</feature>
<feature type="splice variant" id="VSP_057812" description="In isoform 2.">
    <location>
        <begin position="1"/>
        <end position="34"/>
    </location>
</feature>
<feature type="splice variant" id="VSP_057813" description="In isoform 3.">
    <original>MFK</original>
    <variation>MPFWGCGEDEARSGRCR</variation>
    <location>
        <begin position="1"/>
        <end position="3"/>
    </location>
</feature>
<protein>
    <recommendedName>
        <fullName>MICOS complex subunit Mic26</fullName>
    </recommendedName>
    <alternativeName>
        <fullName>Apolipoprotein O</fullName>
    </alternativeName>
    <alternativeName>
        <fullName>MICOS complex subunit Mic23</fullName>
    </alternativeName>
    <alternativeName>
        <fullName>Protein FAM121B</fullName>
    </alternativeName>
</protein>
<accession>Q9DCZ4</accession>
<accession>B1ASQ2</accession>
<accession>B1ASQ3</accession>
<accession>Q9D186</accession>
<comment type="function">
    <text evidence="1 3">Component of the MICOS complex, a large protein complex of the mitochondrial inner membrane that plays crucial roles in the maintenance of crista junctions, inner membrane architecture, and formation of contact sites to the outer membrane. Plays a crucial role in crista junction formation and mitochondrial function (By similarity). Can induce cardiac lipotoxicity by enhancing mitochondrial respiration and fatty acid metabolism in cardiac myoblasts (PubMed:24743151). Promotes cholesterol efflux from macrophage cells. Detected in HDL, LDL and VLDL. Secreted by a microsomal triglyceride transfer protein (MTTP)-dependent mechanism, probably as a VLDL-associated protein that is subsequently transferred to HDL (By similarity).</text>
</comment>
<comment type="subunit">
    <text evidence="1">Component of the mitochondrial contact site and cristae organizing system (MICOS) complex, composed of at least MICOS10/MIC10, CHCHD3/MIC19, CHCHD6/MIC25, APOOL/MIC27, IMMT/MIC60, APOO/MIC23/MIC26 and MICOS13/MIC13. This complex was also known under the names MINOS or MitOS complex. The MICOS complex associates with mitochondrial outer membrane proteins SAMM50, MTX1 and MTX2 (together described as components of the mitochondrial outer membrane sorting assembly machinery (SAM) complex) and DNAJC11, mitochondrial inner membrane protein TMEM11 and with HSPA9. The MICOS and SAM complexes together with DNAJC11 are part of a large protein complex spanning both membranes termed the mitochondrial intermembrane space bridging (MIB) complex. Interacts with IMMT/MIC60. Interacts with MICOS10/MIC10 and APOOL/MIC27.</text>
</comment>
<comment type="subcellular location">
    <subcellularLocation>
        <location evidence="1">Mitochondrion inner membrane</location>
        <topology evidence="2">Single-pass membrane protein</topology>
    </subcellularLocation>
    <subcellularLocation>
        <location evidence="3">Mitochondrion</location>
    </subcellularLocation>
    <subcellularLocation>
        <location evidence="1">Endoplasmic reticulum membrane</location>
    </subcellularLocation>
    <subcellularLocation>
        <location evidence="1">Golgi apparatus membrane</location>
    </subcellularLocation>
    <text evidence="1">Exists in three distinct forms: a glycosylated and secreted form, an ER/Golgi-resident form and a non-glycosylated mitochondrial form.</text>
</comment>
<comment type="alternative products">
    <event type="alternative splicing"/>
    <isoform>
        <id>Q9DCZ4-1</id>
        <name>1</name>
        <sequence type="displayed"/>
    </isoform>
    <isoform>
        <id>Q9DCZ4-2</id>
        <name>2</name>
        <sequence type="described" ref="VSP_057812"/>
    </isoform>
    <isoform>
        <id>Q9DCZ4-3</id>
        <name>3</name>
        <sequence type="described" ref="VSP_057813"/>
    </isoform>
</comment>
<comment type="similarity">
    <text evidence="4">Belongs to the apolipoprotein O/MICOS complex subunit Mic27 family.</text>
</comment>
<gene>
    <name type="primary">Apoo</name>
    <name type="synonym">Fam121b</name>
    <name type="synonym">Mic23</name>
    <name type="synonym">Mic26</name>
</gene>
<sequence>MFKVIQRSVGPASLSLLTFRVYAAPKKDSPHKSYMKIDELSLYSVPEGQSKYVEEPRTQLEENISQLRHHCEPYTSFCQEIYSHTKPKVDHFVQWGVDNYNYLQNAPPGFFPRLGVIGFAGFVGLLFARGSKIKKLVYPPFFMGLGASVYYPQQAITIAQITGEKLYDWGLRGYIVIEDLWKQNFQKPGNVKNSPGNK</sequence>
<organism>
    <name type="scientific">Mus musculus</name>
    <name type="common">Mouse</name>
    <dbReference type="NCBI Taxonomy" id="10090"/>
    <lineage>
        <taxon>Eukaryota</taxon>
        <taxon>Metazoa</taxon>
        <taxon>Chordata</taxon>
        <taxon>Craniata</taxon>
        <taxon>Vertebrata</taxon>
        <taxon>Euteleostomi</taxon>
        <taxon>Mammalia</taxon>
        <taxon>Eutheria</taxon>
        <taxon>Euarchontoglires</taxon>
        <taxon>Glires</taxon>
        <taxon>Rodentia</taxon>
        <taxon>Myomorpha</taxon>
        <taxon>Muroidea</taxon>
        <taxon>Muridae</taxon>
        <taxon>Murinae</taxon>
        <taxon>Mus</taxon>
        <taxon>Mus</taxon>
    </lineage>
</organism>
<reference key="1">
    <citation type="journal article" date="2005" name="Science">
        <title>The transcriptional landscape of the mammalian genome.</title>
        <authorList>
            <person name="Carninci P."/>
            <person name="Kasukawa T."/>
            <person name="Katayama S."/>
            <person name="Gough J."/>
            <person name="Frith M.C."/>
            <person name="Maeda N."/>
            <person name="Oyama R."/>
            <person name="Ravasi T."/>
            <person name="Lenhard B."/>
            <person name="Wells C."/>
            <person name="Kodzius R."/>
            <person name="Shimokawa K."/>
            <person name="Bajic V.B."/>
            <person name="Brenner S.E."/>
            <person name="Batalov S."/>
            <person name="Forrest A.R."/>
            <person name="Zavolan M."/>
            <person name="Davis M.J."/>
            <person name="Wilming L.G."/>
            <person name="Aidinis V."/>
            <person name="Allen J.E."/>
            <person name="Ambesi-Impiombato A."/>
            <person name="Apweiler R."/>
            <person name="Aturaliya R.N."/>
            <person name="Bailey T.L."/>
            <person name="Bansal M."/>
            <person name="Baxter L."/>
            <person name="Beisel K.W."/>
            <person name="Bersano T."/>
            <person name="Bono H."/>
            <person name="Chalk A.M."/>
            <person name="Chiu K.P."/>
            <person name="Choudhary V."/>
            <person name="Christoffels A."/>
            <person name="Clutterbuck D.R."/>
            <person name="Crowe M.L."/>
            <person name="Dalla E."/>
            <person name="Dalrymple B.P."/>
            <person name="de Bono B."/>
            <person name="Della Gatta G."/>
            <person name="di Bernardo D."/>
            <person name="Down T."/>
            <person name="Engstrom P."/>
            <person name="Fagiolini M."/>
            <person name="Faulkner G."/>
            <person name="Fletcher C.F."/>
            <person name="Fukushima T."/>
            <person name="Furuno M."/>
            <person name="Futaki S."/>
            <person name="Gariboldi M."/>
            <person name="Georgii-Hemming P."/>
            <person name="Gingeras T.R."/>
            <person name="Gojobori T."/>
            <person name="Green R.E."/>
            <person name="Gustincich S."/>
            <person name="Harbers M."/>
            <person name="Hayashi Y."/>
            <person name="Hensch T.K."/>
            <person name="Hirokawa N."/>
            <person name="Hill D."/>
            <person name="Huminiecki L."/>
            <person name="Iacono M."/>
            <person name="Ikeo K."/>
            <person name="Iwama A."/>
            <person name="Ishikawa T."/>
            <person name="Jakt M."/>
            <person name="Kanapin A."/>
            <person name="Katoh M."/>
            <person name="Kawasawa Y."/>
            <person name="Kelso J."/>
            <person name="Kitamura H."/>
            <person name="Kitano H."/>
            <person name="Kollias G."/>
            <person name="Krishnan S.P."/>
            <person name="Kruger A."/>
            <person name="Kummerfeld S.K."/>
            <person name="Kurochkin I.V."/>
            <person name="Lareau L.F."/>
            <person name="Lazarevic D."/>
            <person name="Lipovich L."/>
            <person name="Liu J."/>
            <person name="Liuni S."/>
            <person name="McWilliam S."/>
            <person name="Madan Babu M."/>
            <person name="Madera M."/>
            <person name="Marchionni L."/>
            <person name="Matsuda H."/>
            <person name="Matsuzawa S."/>
            <person name="Miki H."/>
            <person name="Mignone F."/>
            <person name="Miyake S."/>
            <person name="Morris K."/>
            <person name="Mottagui-Tabar S."/>
            <person name="Mulder N."/>
            <person name="Nakano N."/>
            <person name="Nakauchi H."/>
            <person name="Ng P."/>
            <person name="Nilsson R."/>
            <person name="Nishiguchi S."/>
            <person name="Nishikawa S."/>
            <person name="Nori F."/>
            <person name="Ohara O."/>
            <person name="Okazaki Y."/>
            <person name="Orlando V."/>
            <person name="Pang K.C."/>
            <person name="Pavan W.J."/>
            <person name="Pavesi G."/>
            <person name="Pesole G."/>
            <person name="Petrovsky N."/>
            <person name="Piazza S."/>
            <person name="Reed J."/>
            <person name="Reid J.F."/>
            <person name="Ring B.Z."/>
            <person name="Ringwald M."/>
            <person name="Rost B."/>
            <person name="Ruan Y."/>
            <person name="Salzberg S.L."/>
            <person name="Sandelin A."/>
            <person name="Schneider C."/>
            <person name="Schoenbach C."/>
            <person name="Sekiguchi K."/>
            <person name="Semple C.A."/>
            <person name="Seno S."/>
            <person name="Sessa L."/>
            <person name="Sheng Y."/>
            <person name="Shibata Y."/>
            <person name="Shimada H."/>
            <person name="Shimada K."/>
            <person name="Silva D."/>
            <person name="Sinclair B."/>
            <person name="Sperling S."/>
            <person name="Stupka E."/>
            <person name="Sugiura K."/>
            <person name="Sultana R."/>
            <person name="Takenaka Y."/>
            <person name="Taki K."/>
            <person name="Tammoja K."/>
            <person name="Tan S.L."/>
            <person name="Tang S."/>
            <person name="Taylor M.S."/>
            <person name="Tegner J."/>
            <person name="Teichmann S.A."/>
            <person name="Ueda H.R."/>
            <person name="van Nimwegen E."/>
            <person name="Verardo R."/>
            <person name="Wei C.L."/>
            <person name="Yagi K."/>
            <person name="Yamanishi H."/>
            <person name="Zabarovsky E."/>
            <person name="Zhu S."/>
            <person name="Zimmer A."/>
            <person name="Hide W."/>
            <person name="Bult C."/>
            <person name="Grimmond S.M."/>
            <person name="Teasdale R.D."/>
            <person name="Liu E.T."/>
            <person name="Brusic V."/>
            <person name="Quackenbush J."/>
            <person name="Wahlestedt C."/>
            <person name="Mattick J.S."/>
            <person name="Hume D.A."/>
            <person name="Kai C."/>
            <person name="Sasaki D."/>
            <person name="Tomaru Y."/>
            <person name="Fukuda S."/>
            <person name="Kanamori-Katayama M."/>
            <person name="Suzuki M."/>
            <person name="Aoki J."/>
            <person name="Arakawa T."/>
            <person name="Iida J."/>
            <person name="Imamura K."/>
            <person name="Itoh M."/>
            <person name="Kato T."/>
            <person name="Kawaji H."/>
            <person name="Kawagashira N."/>
            <person name="Kawashima T."/>
            <person name="Kojima M."/>
            <person name="Kondo S."/>
            <person name="Konno H."/>
            <person name="Nakano K."/>
            <person name="Ninomiya N."/>
            <person name="Nishio T."/>
            <person name="Okada M."/>
            <person name="Plessy C."/>
            <person name="Shibata K."/>
            <person name="Shiraki T."/>
            <person name="Suzuki S."/>
            <person name="Tagami M."/>
            <person name="Waki K."/>
            <person name="Watahiki A."/>
            <person name="Okamura-Oho Y."/>
            <person name="Suzuki H."/>
            <person name="Kawai J."/>
            <person name="Hayashizaki Y."/>
        </authorList>
    </citation>
    <scope>NUCLEOTIDE SEQUENCE [LARGE SCALE MRNA] (ISOFORMS 2 AND 3)</scope>
    <source>
        <strain>C57BL/6J</strain>
        <tissue>Kidney</tissue>
    </source>
</reference>
<reference key="2">
    <citation type="journal article" date="2009" name="PLoS Biol.">
        <title>Lineage-specific biology revealed by a finished genome assembly of the mouse.</title>
        <authorList>
            <person name="Church D.M."/>
            <person name="Goodstadt L."/>
            <person name="Hillier L.W."/>
            <person name="Zody M.C."/>
            <person name="Goldstein S."/>
            <person name="She X."/>
            <person name="Bult C.J."/>
            <person name="Agarwala R."/>
            <person name="Cherry J.L."/>
            <person name="DiCuccio M."/>
            <person name="Hlavina W."/>
            <person name="Kapustin Y."/>
            <person name="Meric P."/>
            <person name="Maglott D."/>
            <person name="Birtle Z."/>
            <person name="Marques A.C."/>
            <person name="Graves T."/>
            <person name="Zhou S."/>
            <person name="Teague B."/>
            <person name="Potamousis K."/>
            <person name="Churas C."/>
            <person name="Place M."/>
            <person name="Herschleb J."/>
            <person name="Runnheim R."/>
            <person name="Forrest D."/>
            <person name="Amos-Landgraf J."/>
            <person name="Schwartz D.C."/>
            <person name="Cheng Z."/>
            <person name="Lindblad-Toh K."/>
            <person name="Eichler E.E."/>
            <person name="Ponting C.P."/>
        </authorList>
    </citation>
    <scope>NUCLEOTIDE SEQUENCE [LARGE SCALE GENOMIC DNA]</scope>
    <source>
        <strain>C57BL/6J</strain>
    </source>
</reference>
<reference key="3">
    <citation type="submission" date="2005-07" db="EMBL/GenBank/DDBJ databases">
        <authorList>
            <person name="Mural R.J."/>
            <person name="Adams M.D."/>
            <person name="Myers E.W."/>
            <person name="Smith H.O."/>
            <person name="Venter J.C."/>
        </authorList>
    </citation>
    <scope>NUCLEOTIDE SEQUENCE [LARGE SCALE GENOMIC DNA]</scope>
</reference>
<reference key="4">
    <citation type="journal article" date="2004" name="Genome Res.">
        <title>The status, quality, and expansion of the NIH full-length cDNA project: the Mammalian Gene Collection (MGC).</title>
        <authorList>
            <consortium name="The MGC Project Team"/>
        </authorList>
    </citation>
    <scope>NUCLEOTIDE SEQUENCE [LARGE SCALE MRNA] (ISOFORM 2)</scope>
    <source>
        <tissue>Mammary cancer</tissue>
    </source>
</reference>
<reference key="5">
    <citation type="journal article" date="2010" name="Cell">
        <title>A tissue-specific atlas of mouse protein phosphorylation and expression.</title>
        <authorList>
            <person name="Huttlin E.L."/>
            <person name="Jedrychowski M.P."/>
            <person name="Elias J.E."/>
            <person name="Goswami T."/>
            <person name="Rad R."/>
            <person name="Beausoleil S.A."/>
            <person name="Villen J."/>
            <person name="Haas W."/>
            <person name="Sowa M.E."/>
            <person name="Gygi S.P."/>
        </authorList>
    </citation>
    <scope>IDENTIFICATION BY MASS SPECTROMETRY [LARGE SCALE ANALYSIS]</scope>
    <source>
        <tissue>Brain</tissue>
        <tissue>Brown adipose tissue</tissue>
        <tissue>Heart</tissue>
        <tissue>Kidney</tissue>
        <tissue>Liver</tissue>
        <tissue>Lung</tissue>
        <tissue>Pancreas</tissue>
        <tissue>Spleen</tissue>
        <tissue>Testis</tissue>
    </source>
</reference>
<reference key="6">
    <citation type="journal article" date="2014" name="J. Clin. Invest.">
        <title>Apolipoprotein O is mitochondrial and promotes lipotoxicity in heart.</title>
        <authorList>
            <person name="Turkieh A."/>
            <person name="Caubere C."/>
            <person name="Barutaut M."/>
            <person name="Desmoulin F."/>
            <person name="Harmancey R."/>
            <person name="Galinier M."/>
            <person name="Berry M."/>
            <person name="Dambrin C."/>
            <person name="Polidori C."/>
            <person name="Casteilla L."/>
            <person name="Koukoui F."/>
            <person name="Rouet P."/>
            <person name="Smih F."/>
        </authorList>
    </citation>
    <scope>FUNCTION</scope>
    <scope>SUBCELLULAR LOCATION</scope>
</reference>
<evidence type="ECO:0000250" key="1">
    <source>
        <dbReference type="UniProtKB" id="Q9BUR5"/>
    </source>
</evidence>
<evidence type="ECO:0000255" key="2"/>
<evidence type="ECO:0000269" key="3">
    <source>
    </source>
</evidence>
<evidence type="ECO:0000305" key="4"/>
<proteinExistence type="evidence at protein level"/>
<name>MIC26_MOUSE</name>
<keyword id="KW-0025">Alternative splicing</keyword>
<keyword id="KW-0256">Endoplasmic reticulum</keyword>
<keyword id="KW-0325">Glycoprotein</keyword>
<keyword id="KW-0333">Golgi apparatus</keyword>
<keyword id="KW-0472">Membrane</keyword>
<keyword id="KW-0496">Mitochondrion</keyword>
<keyword id="KW-0999">Mitochondrion inner membrane</keyword>
<keyword id="KW-1185">Reference proteome</keyword>
<keyword id="KW-0732">Signal</keyword>
<keyword id="KW-0812">Transmembrane</keyword>
<keyword id="KW-1133">Transmembrane helix</keyword>